<sequence length="476" mass="54428">MAVPFVEDWDLVQTLGEGAYGEVQLAVNRITEEAVAVKIVDMKRAIDCPENIKKEICINKMLNHENVVKFYGHRREGNIQYLFLEYCSGGELFDRIEPDIGMPEQDAQRFFHQLMAGVVYLHGIGITHRDIKPENLLLDERDNLKISDFGLATVFRHNNRERLLNKMCGTLPYVAPELLKRKEFHAEPVDVWSCGIVLTAMLAGELPWDQPSDSCQEYSDWKEKKTYLNPWKKIDSAPLALLHKILVENPSARITIPDIKKDRWYNKPLNRGAKRPRATSGGMSESSSGFSKHIHSNLDFSPINSGSSEENVKFSSSQPEPRTGLSLWDTGPSNVDKLVQGISFSQPTCPDHMLVNSQLLGTPGSSQNPWQRLVKRMTRFFTKLDADKSYQCLKETFEKLGYQWKKSCMNQVTVSTMDRRNNKLIFKINLVEMDEKILVDFRLSKGDGLEFKRHFLKIKGKLSDIVSSQKVWFPVT</sequence>
<accession>Q91ZN7</accession>
<accession>Q91ZN6</accession>
<name>CHK1_RAT</name>
<protein>
    <recommendedName>
        <fullName>Serine/threonine-protein kinase Chk1</fullName>
        <ecNumber evidence="2">2.7.11.1</ecNumber>
    </recommendedName>
    <alternativeName>
        <fullName>CHK1 checkpoint homolog</fullName>
    </alternativeName>
    <alternativeName>
        <fullName>Checkpoint kinase-1</fullName>
    </alternativeName>
</protein>
<feature type="chain" id="PRO_0000085850" description="Serine/threonine-protein kinase Chk1">
    <location>
        <begin position="1"/>
        <end position="476"/>
    </location>
</feature>
<feature type="domain" description="Protein kinase" evidence="4">
    <location>
        <begin position="9"/>
        <end position="265"/>
    </location>
</feature>
<feature type="region of interest" description="Interaction with CLSPN" evidence="1">
    <location>
        <begin position="1"/>
        <end position="265"/>
    </location>
</feature>
<feature type="region of interest" description="Disordered" evidence="6">
    <location>
        <begin position="267"/>
        <end position="329"/>
    </location>
</feature>
<feature type="region of interest" description="Autoinhibitory region" evidence="1">
    <location>
        <begin position="391"/>
        <end position="476"/>
    </location>
</feature>
<feature type="compositionally biased region" description="Low complexity" evidence="6">
    <location>
        <begin position="280"/>
        <end position="291"/>
    </location>
</feature>
<feature type="compositionally biased region" description="Polar residues" evidence="6">
    <location>
        <begin position="298"/>
        <end position="320"/>
    </location>
</feature>
<feature type="active site" description="Proton acceptor" evidence="4 5">
    <location>
        <position position="130"/>
    </location>
</feature>
<feature type="binding site" evidence="4">
    <location>
        <begin position="15"/>
        <end position="23"/>
    </location>
    <ligand>
        <name>ATP</name>
        <dbReference type="ChEBI" id="CHEBI:30616"/>
    </ligand>
</feature>
<feature type="binding site" evidence="4">
    <location>
        <position position="38"/>
    </location>
    <ligand>
        <name>ATP</name>
        <dbReference type="ChEBI" id="CHEBI:30616"/>
    </ligand>
</feature>
<feature type="modified residue" description="Phosphoserine; by PKB/AKT1" evidence="3">
    <location>
        <position position="280"/>
    </location>
</feature>
<feature type="modified residue" description="Phosphoserine" evidence="2">
    <location>
        <position position="286"/>
    </location>
</feature>
<feature type="modified residue" description="Phosphoserine" evidence="2">
    <location>
        <position position="296"/>
    </location>
</feature>
<feature type="modified residue" description="Phosphoserine" evidence="2">
    <location>
        <position position="301"/>
    </location>
</feature>
<feature type="modified residue" description="Phosphoserine; by ATM and ATR" evidence="2">
    <location>
        <position position="317"/>
    </location>
</feature>
<feature type="modified residue" description="Phosphoserine; by ATM and ATR" evidence="2">
    <location>
        <position position="345"/>
    </location>
</feature>
<feature type="modified residue" description="Phosphoserine" evidence="3">
    <location>
        <position position="463"/>
    </location>
</feature>
<feature type="modified residue" description="Phosphoserine" evidence="2">
    <location>
        <position position="467"/>
    </location>
</feature>
<feature type="modified residue" description="Phosphoserine" evidence="2">
    <location>
        <position position="468"/>
    </location>
</feature>
<feature type="cross-link" description="Glycyl lysine isopeptide (Lys-Gly) (interchain with G-Cter in ubiquitin)" evidence="2">
    <location>
        <position position="132"/>
    </location>
</feature>
<feature type="cross-link" description="Glycyl lysine isopeptide (Lys-Gly) (interchain with G-Cter in ubiquitin)" evidence="2">
    <location>
        <position position="436"/>
    </location>
</feature>
<feature type="splice variant" id="VSP_015770" description="In isoform 2." evidence="8">
    <location>
        <begin position="1"/>
        <end position="282"/>
    </location>
</feature>
<gene>
    <name type="primary">Chek1</name>
    <name type="synonym">Chk1</name>
</gene>
<comment type="function">
    <text evidence="2 3">Serine/threonine-protein kinase which is required for checkpoint-mediated cell cycle arrest and activation of DNA repair in response to the presence of DNA damage or unreplicated DNA. May also negatively regulate cell cycle progression during unperturbed cell cycles. This regulation is achieved by a number of mechanisms that together help to preserve the integrity of the genome. Recognizes the substrate consensus sequence [R-X-X-S/T]. Binds to and phosphorylates CDC25A, CDC25B and CDC25C. Phosphorylation of CDC25A at 'Ser-178' and 'Thr-507' and phosphorylation of CDC25C at 'Ser-216' creates binding sites for 14-3-3 proteins which inhibit CDC25A and CDC25C. Phosphorylation of CDC25A at 'Ser-76', 'Ser-124', 'Ser-178', 'Ser-279' and 'Ser-293' promotes proteolysis of CDC25A. Phosphorylation of CDC25A at 'Ser-76' primes the protein for subsequent phosphorylation at 'Ser-79', 'Ser-82' and 'Ser-88' by NEK11, which is required for polyubiquitination and degradation of CDCD25A. Inhibition of CDC25 leads to increased inhibitory tyrosine phosphorylation of CDK-cyclin complexes and blocks cell cycle progression. Also phosphorylates NEK6. Binds to and phosphorylates RAD51 at 'Thr-309', which promotes the release of RAD51 from BRCA2 and enhances the association of RAD51 with chromatin, thereby promoting DNA repair by homologous recombination. Phosphorylates multiple sites within the C-terminus of TP53, which promotes activation of TP53 by acetylation and promotes cell cycle arrest and suppression of cellular proliferation. Also promotes repair of DNA cross-links through phosphorylation of FANCE. Binds to and phosphorylates TLK1 at 'Ser-743', which prevents the TLK1-dependent phosphorylation of the chromatin assembly factor ASF1A. This may enhance chromatin assembly both in the presence or absence of DNA damage. May also play a role in replication fork maintenance through regulation of PCNA (By similarity). May regulate the transcription of genes that regulate cell-cycle progression through the phosphorylation of histones. Phosphorylates histone H3.1 (to form H3T11ph), which leads to epigenetic inhibition of a subset of genes (By similarity). May also phosphorylate RB1 to promote its interaction with the E2F family of transcription factors and subsequent cell cycle arrest. Phosphorylates SPRTN, promoting SPRTN recruitment to chromatin (By similarity). Reduces replication stress and activates the G2/M checkpoint, by phosphorylating and inactivating PABIR1/FAM122A and promoting the serine/threonine-protein phosphatase 2A-mediated dephosphorylation and stabilization of WEE1 levels and activity (By similarity).</text>
</comment>
<comment type="catalytic activity">
    <reaction evidence="2">
        <text>L-seryl-[protein] + ATP = O-phospho-L-seryl-[protein] + ADP + H(+)</text>
        <dbReference type="Rhea" id="RHEA:17989"/>
        <dbReference type="Rhea" id="RHEA-COMP:9863"/>
        <dbReference type="Rhea" id="RHEA-COMP:11604"/>
        <dbReference type="ChEBI" id="CHEBI:15378"/>
        <dbReference type="ChEBI" id="CHEBI:29999"/>
        <dbReference type="ChEBI" id="CHEBI:30616"/>
        <dbReference type="ChEBI" id="CHEBI:83421"/>
        <dbReference type="ChEBI" id="CHEBI:456216"/>
        <dbReference type="EC" id="2.7.11.1"/>
    </reaction>
</comment>
<comment type="catalytic activity">
    <reaction evidence="2">
        <text>L-threonyl-[protein] + ATP = O-phospho-L-threonyl-[protein] + ADP + H(+)</text>
        <dbReference type="Rhea" id="RHEA:46608"/>
        <dbReference type="Rhea" id="RHEA-COMP:11060"/>
        <dbReference type="Rhea" id="RHEA-COMP:11605"/>
        <dbReference type="ChEBI" id="CHEBI:15378"/>
        <dbReference type="ChEBI" id="CHEBI:30013"/>
        <dbReference type="ChEBI" id="CHEBI:30616"/>
        <dbReference type="ChEBI" id="CHEBI:61977"/>
        <dbReference type="ChEBI" id="CHEBI:456216"/>
        <dbReference type="EC" id="2.7.11.1"/>
    </reaction>
</comment>
<comment type="activity regulation">
    <text evidence="2">Activated through phosphorylation predominantly by ATR but also by ATM in response to DNA damage or inhibition of DNA replication. Activation is modulated by several mediators including CLSPN, BRCA1 and FEM1B. Proteolytic cleavage at the C-terminus by SPRTN during normal DNA replication activates the protein kinase activity.</text>
</comment>
<comment type="subunit">
    <text evidence="2">Interacts (phosphorylated by ATR) with RAD51. Interacts with and phosphorylates CLSPN, an adapter protein that regulates the ATR-dependent phosphorylation of CHEK1. Interacts with BRCA1. Interacts with and phosphorylates CDC25A, CDC25B and CDC25C. Interacts with FBXO6, which regulates CHEK1. Interacts with PPM1D, which regulates CHEK1 through dephosphorylation. Interacts with TIMELESS; DNA damage-dependent. Interacts with FEM1B; activates CHEK1 in response to stress. Interacts with TLK1. Interacts with XPO1 and YWHAZ. Interacts with CDK5RAP3; antagonizes CHEK1.</text>
</comment>
<comment type="subcellular location">
    <subcellularLocation>
        <location evidence="2">Nucleus</location>
    </subcellularLocation>
    <subcellularLocation>
        <location evidence="2">Chromosome</location>
    </subcellularLocation>
    <subcellularLocation>
        <location evidence="2">Cytoplasm</location>
    </subcellularLocation>
    <subcellularLocation>
        <location evidence="2">Cytoplasm</location>
        <location evidence="2">Cytoskeleton</location>
        <location evidence="2">Microtubule organizing center</location>
        <location evidence="2">Centrosome</location>
    </subcellularLocation>
    <text evidence="2">Nuclear export is mediated at least in part by XPO1/CRM1. Also localizes to the centrosome specifically during interphase, where it may protect centrosomal CDC2 kinase from inappropriate activation by cytoplasmic CDC25B. Proteolytic cleavage at the C-terminus by SPRTN promotes removal from chromatin.</text>
</comment>
<comment type="alternative products">
    <event type="alternative promoter"/>
    <isoform>
        <id>Q91ZN7-1</id>
        <name>1</name>
        <sequence type="displayed"/>
    </isoform>
    <isoform>
        <id>Q91ZN7-2</id>
        <name>2</name>
        <sequence type="described" ref="VSP_015770"/>
    </isoform>
</comment>
<comment type="tissue specificity">
    <molecule>Isoform 1</molecule>
    <text evidence="7">Expressed in brain, heart, liver, lung, skeletal muscle, spleen and testis.</text>
</comment>
<comment type="tissue specificity">
    <molecule>Isoform 2</molecule>
    <text evidence="7">Expressed only in liver.</text>
</comment>
<comment type="domain">
    <text evidence="2">The autoinhibitory region (AIR) inhibits the activity of the kinase domain.</text>
</comment>
<comment type="PTM">
    <text evidence="2">Phosphorylated by ATR in a RAD17-dependent manner in response to ultraviolet irradiation and inhibition of DNA replication. Phosphorylated by ATM in response to ionizing irradiation. ATM and ATR can both phosphorylate Ser-317 and Ser-345 and this results in enhanced kinase activity. Phosphorylation at Ser-345 induces a change in the conformation of the protein, activates the kinase activity and is a prerequisite for interaction with FBXO6 and subsequent ubiquitination at Lys-436. Phosphorylation at Ser-345 also increases binding to 14-3-3 proteins and promotes nuclear retention. Conversely, dephosphorylation at Ser-345 by PPM1D may contribute to exit from checkpoint mediated cell cycle arrest. Phosphorylation at Ser-280 by AKT1/PKB, may promote mono and/or diubiquitination. Also phosphorylated at undefined residues during mitotic arrest, resulting in decreased activity (By similarity).</text>
</comment>
<comment type="PTM">
    <text evidence="2">Ubiquitinated. Mono or diubiquitination promotes nuclear exclusion. The activated form (phosphorylated on Ser-345) is polyubiquitinated at Lys-436 by some SCF-type E3 ubiquitin ligase complex containing FBXO6 promoting its degradation. Ubiquitination and degradation are required to terminate the checkpoint and ensure that activated CHEK1 does not accumulate as cells progress through S phase, when replication forks encounter transient impediments during normal DNA replication. 'Lys-63'-mediated ubiquitination by TRAF4 at Lys-132 activates cell cycle arrest and activation of DNA repair (By similarity).</text>
</comment>
<comment type="PTM">
    <text evidence="2">Proteolytically cleaved at the C-terminus by SPRTN during normal DNA replication, thereby promoting CHEK1 removal from chromatin and activating the protein kinase activity.</text>
</comment>
<comment type="similarity">
    <text evidence="9">Belongs to the protein kinase superfamily. CAMK Ser/Thr protein kinase family. NIM1 subfamily.</text>
</comment>
<keyword id="KW-0877">Alternative promoter usage</keyword>
<keyword id="KW-0067">ATP-binding</keyword>
<keyword id="KW-0131">Cell cycle</keyword>
<keyword id="KW-0158">Chromosome</keyword>
<keyword id="KW-0963">Cytoplasm</keyword>
<keyword id="KW-0206">Cytoskeleton</keyword>
<keyword id="KW-0227">DNA damage</keyword>
<keyword id="KW-0234">DNA repair</keyword>
<keyword id="KW-1017">Isopeptide bond</keyword>
<keyword id="KW-0418">Kinase</keyword>
<keyword id="KW-0547">Nucleotide-binding</keyword>
<keyword id="KW-0539">Nucleus</keyword>
<keyword id="KW-0597">Phosphoprotein</keyword>
<keyword id="KW-1185">Reference proteome</keyword>
<keyword id="KW-0723">Serine/threonine-protein kinase</keyword>
<keyword id="KW-0808">Transferase</keyword>
<keyword id="KW-0832">Ubl conjugation</keyword>
<organism>
    <name type="scientific">Rattus norvegicus</name>
    <name type="common">Rat</name>
    <dbReference type="NCBI Taxonomy" id="10116"/>
    <lineage>
        <taxon>Eukaryota</taxon>
        <taxon>Metazoa</taxon>
        <taxon>Chordata</taxon>
        <taxon>Craniata</taxon>
        <taxon>Vertebrata</taxon>
        <taxon>Euteleostomi</taxon>
        <taxon>Mammalia</taxon>
        <taxon>Eutheria</taxon>
        <taxon>Euarchontoglires</taxon>
        <taxon>Glires</taxon>
        <taxon>Rodentia</taxon>
        <taxon>Myomorpha</taxon>
        <taxon>Muroidea</taxon>
        <taxon>Muridae</taxon>
        <taxon>Murinae</taxon>
        <taxon>Rattus</taxon>
    </lineage>
</organism>
<proteinExistence type="evidence at transcript level"/>
<dbReference type="EC" id="2.7.11.1" evidence="2"/>
<dbReference type="EMBL" id="AF414135">
    <property type="protein sequence ID" value="AAK98619.1"/>
    <property type="molecule type" value="mRNA"/>
</dbReference>
<dbReference type="EMBL" id="AF414136">
    <property type="protein sequence ID" value="AAK98620.1"/>
    <property type="molecule type" value="mRNA"/>
</dbReference>
<dbReference type="EMBL" id="AF443592">
    <property type="protein sequence ID" value="AAL37894.1"/>
    <property type="molecule type" value="mRNA"/>
</dbReference>
<dbReference type="RefSeq" id="NP_536325.1">
    <molecule id="Q91ZN7-1"/>
    <property type="nucleotide sequence ID" value="NM_080400.2"/>
</dbReference>
<dbReference type="RefSeq" id="XP_008764264.1">
    <molecule id="Q91ZN7-1"/>
    <property type="nucleotide sequence ID" value="XM_008766042.4"/>
</dbReference>
<dbReference type="RefSeq" id="XP_008764265.1">
    <molecule id="Q91ZN7-1"/>
    <property type="nucleotide sequence ID" value="XM_008766043.3"/>
</dbReference>
<dbReference type="SMR" id="Q91ZN7"/>
<dbReference type="BioGRID" id="250797">
    <property type="interactions" value="2"/>
</dbReference>
<dbReference type="FunCoup" id="Q91ZN7">
    <property type="interactions" value="3154"/>
</dbReference>
<dbReference type="PhosphoSitePlus" id="Q91ZN7"/>
<dbReference type="PaxDb" id="10116-ENSRNOP00000011226"/>
<dbReference type="Ensembl" id="ENSRNOT00000011226.6">
    <molecule id="Q91ZN7-1"/>
    <property type="protein sequence ID" value="ENSRNOP00000011226.4"/>
    <property type="gene ID" value="ENSRNOG00000071217.1"/>
</dbReference>
<dbReference type="GeneID" id="140583"/>
<dbReference type="KEGG" id="rno:140583"/>
<dbReference type="UCSC" id="RGD:620545">
    <molecule id="Q91ZN7-1"/>
    <property type="organism name" value="rat"/>
</dbReference>
<dbReference type="AGR" id="RGD:620545"/>
<dbReference type="CTD" id="1111"/>
<dbReference type="RGD" id="620545">
    <property type="gene designation" value="Chek1"/>
</dbReference>
<dbReference type="eggNOG" id="KOG0590">
    <property type="taxonomic scope" value="Eukaryota"/>
</dbReference>
<dbReference type="GeneTree" id="ENSGT00940000159682"/>
<dbReference type="HOGENOM" id="CLU_000288_59_8_1"/>
<dbReference type="InParanoid" id="Q91ZN7"/>
<dbReference type="OMA" id="GYTCKVG"/>
<dbReference type="OrthoDB" id="539158at2759"/>
<dbReference type="PhylomeDB" id="Q91ZN7"/>
<dbReference type="TreeFam" id="TF351441"/>
<dbReference type="Reactome" id="R-RNO-1433557">
    <property type="pathway name" value="Signaling by SCF-KIT"/>
</dbReference>
<dbReference type="Reactome" id="R-RNO-176187">
    <property type="pathway name" value="Activation of ATR in response to replication stress"/>
</dbReference>
<dbReference type="Reactome" id="R-RNO-5693607">
    <property type="pathway name" value="Processing of DNA double-strand break ends"/>
</dbReference>
<dbReference type="Reactome" id="R-RNO-5693616">
    <property type="pathway name" value="Presynaptic phase of homologous DNA pairing and strand exchange"/>
</dbReference>
<dbReference type="Reactome" id="R-RNO-6804756">
    <property type="pathway name" value="Regulation of TP53 Activity through Phosphorylation"/>
</dbReference>
<dbReference type="Reactome" id="R-RNO-69473">
    <property type="pathway name" value="G2/M DNA damage checkpoint"/>
</dbReference>
<dbReference type="Reactome" id="R-RNO-69601">
    <property type="pathway name" value="Ubiquitin Mediated Degradation of Phosphorylated Cdc25A"/>
</dbReference>
<dbReference type="Reactome" id="R-RNO-8953750">
    <property type="pathway name" value="Transcriptional Regulation by E2F6"/>
</dbReference>
<dbReference type="SABIO-RK" id="Q91ZN7"/>
<dbReference type="PRO" id="PR:Q91ZN7"/>
<dbReference type="Proteomes" id="UP000002494">
    <property type="component" value="Chromosome 8"/>
</dbReference>
<dbReference type="Bgee" id="ENSRNOG00000031896">
    <property type="expression patterns" value="Expressed in jejunum and 18 other cell types or tissues"/>
</dbReference>
<dbReference type="ExpressionAtlas" id="Q91ZN7">
    <property type="expression patterns" value="baseline and differential"/>
</dbReference>
<dbReference type="GO" id="GO:0005813">
    <property type="term" value="C:centrosome"/>
    <property type="evidence" value="ECO:0000250"/>
    <property type="project" value="UniProtKB"/>
</dbReference>
<dbReference type="GO" id="GO:0000785">
    <property type="term" value="C:chromatin"/>
    <property type="evidence" value="ECO:0000250"/>
    <property type="project" value="UniProtKB"/>
</dbReference>
<dbReference type="GO" id="GO:0000781">
    <property type="term" value="C:chromosome, telomeric region"/>
    <property type="evidence" value="ECO:0000266"/>
    <property type="project" value="RGD"/>
</dbReference>
<dbReference type="GO" id="GO:0000794">
    <property type="term" value="C:condensed nuclear chromosome"/>
    <property type="evidence" value="ECO:0000250"/>
    <property type="project" value="UniProtKB"/>
</dbReference>
<dbReference type="GO" id="GO:0005737">
    <property type="term" value="C:cytoplasm"/>
    <property type="evidence" value="ECO:0000266"/>
    <property type="project" value="RGD"/>
</dbReference>
<dbReference type="GO" id="GO:0005634">
    <property type="term" value="C:nucleus"/>
    <property type="evidence" value="ECO:0000250"/>
    <property type="project" value="UniProtKB"/>
</dbReference>
<dbReference type="GO" id="GO:0032991">
    <property type="term" value="C:protein-containing complex"/>
    <property type="evidence" value="ECO:0000266"/>
    <property type="project" value="RGD"/>
</dbReference>
<dbReference type="GO" id="GO:0005657">
    <property type="term" value="C:replication fork"/>
    <property type="evidence" value="ECO:0000266"/>
    <property type="project" value="RGD"/>
</dbReference>
<dbReference type="GO" id="GO:0005524">
    <property type="term" value="F:ATP binding"/>
    <property type="evidence" value="ECO:0007669"/>
    <property type="project" value="UniProtKB-KW"/>
</dbReference>
<dbReference type="GO" id="GO:0035402">
    <property type="term" value="F:histone H3T11 kinase activity"/>
    <property type="evidence" value="ECO:0000250"/>
    <property type="project" value="UniProtKB"/>
</dbReference>
<dbReference type="GO" id="GO:0019904">
    <property type="term" value="F:protein domain specific binding"/>
    <property type="evidence" value="ECO:0000266"/>
    <property type="project" value="RGD"/>
</dbReference>
<dbReference type="GO" id="GO:0004672">
    <property type="term" value="F:protein kinase activity"/>
    <property type="evidence" value="ECO:0000314"/>
    <property type="project" value="RGD"/>
</dbReference>
<dbReference type="GO" id="GO:0106310">
    <property type="term" value="F:protein serine kinase activity"/>
    <property type="evidence" value="ECO:0007669"/>
    <property type="project" value="RHEA"/>
</dbReference>
<dbReference type="GO" id="GO:0004674">
    <property type="term" value="F:protein serine/threonine kinase activity"/>
    <property type="evidence" value="ECO:0000250"/>
    <property type="project" value="UniProtKB"/>
</dbReference>
<dbReference type="GO" id="GO:0006915">
    <property type="term" value="P:apoptotic process"/>
    <property type="evidence" value="ECO:0000266"/>
    <property type="project" value="RGD"/>
</dbReference>
<dbReference type="GO" id="GO:1902742">
    <property type="term" value="P:apoptotic process involved in development"/>
    <property type="evidence" value="ECO:0000266"/>
    <property type="project" value="RGD"/>
</dbReference>
<dbReference type="GO" id="GO:0071313">
    <property type="term" value="P:cellular response to caffeine"/>
    <property type="evidence" value="ECO:0000270"/>
    <property type="project" value="RGD"/>
</dbReference>
<dbReference type="GO" id="GO:0071260">
    <property type="term" value="P:cellular response to mechanical stimulus"/>
    <property type="evidence" value="ECO:0000266"/>
    <property type="project" value="RGD"/>
</dbReference>
<dbReference type="GO" id="GO:0006338">
    <property type="term" value="P:chromatin remodeling"/>
    <property type="evidence" value="ECO:0000250"/>
    <property type="project" value="UniProtKB"/>
</dbReference>
<dbReference type="GO" id="GO:0000077">
    <property type="term" value="P:DNA damage checkpoint signaling"/>
    <property type="evidence" value="ECO:0000250"/>
    <property type="project" value="UniProtKB"/>
</dbReference>
<dbReference type="GO" id="GO:0006974">
    <property type="term" value="P:DNA damage response"/>
    <property type="evidence" value="ECO:0000250"/>
    <property type="project" value="UniProtKB"/>
</dbReference>
<dbReference type="GO" id="GO:0006281">
    <property type="term" value="P:DNA repair"/>
    <property type="evidence" value="ECO:0000266"/>
    <property type="project" value="RGD"/>
</dbReference>
<dbReference type="GO" id="GO:0000086">
    <property type="term" value="P:G2/M transition of mitotic cell cycle"/>
    <property type="evidence" value="ECO:0000266"/>
    <property type="project" value="RGD"/>
</dbReference>
<dbReference type="GO" id="GO:0001833">
    <property type="term" value="P:inner cell mass cell proliferation"/>
    <property type="evidence" value="ECO:0000266"/>
    <property type="project" value="RGD"/>
</dbReference>
<dbReference type="GO" id="GO:0007095">
    <property type="term" value="P:mitotic G2 DNA damage checkpoint signaling"/>
    <property type="evidence" value="ECO:0000266"/>
    <property type="project" value="RGD"/>
</dbReference>
<dbReference type="GO" id="GO:0044818">
    <property type="term" value="P:mitotic G2/M transition checkpoint"/>
    <property type="evidence" value="ECO:0000250"/>
    <property type="project" value="UniProtKB"/>
</dbReference>
<dbReference type="GO" id="GO:2000279">
    <property type="term" value="P:negative regulation of DNA biosynthetic process"/>
    <property type="evidence" value="ECO:0000315"/>
    <property type="project" value="RGD"/>
</dbReference>
<dbReference type="GO" id="GO:0010972">
    <property type="term" value="P:negative regulation of G2/M transition of mitotic cell cycle"/>
    <property type="evidence" value="ECO:0000315"/>
    <property type="project" value="RGD"/>
</dbReference>
<dbReference type="GO" id="GO:0045814">
    <property type="term" value="P:negative regulation of gene expression, epigenetic"/>
    <property type="evidence" value="ECO:0000250"/>
    <property type="project" value="UniProtKB"/>
</dbReference>
<dbReference type="GO" id="GO:0045839">
    <property type="term" value="P:negative regulation of mitotic nuclear division"/>
    <property type="evidence" value="ECO:0000250"/>
    <property type="project" value="UniProtKB"/>
</dbReference>
<dbReference type="GO" id="GO:0006997">
    <property type="term" value="P:nucleus organization"/>
    <property type="evidence" value="ECO:0000266"/>
    <property type="project" value="RGD"/>
</dbReference>
<dbReference type="GO" id="GO:0018107">
    <property type="term" value="P:peptidyl-threonine phosphorylation"/>
    <property type="evidence" value="ECO:0000250"/>
    <property type="project" value="UniProtKB"/>
</dbReference>
<dbReference type="GO" id="GO:0045787">
    <property type="term" value="P:positive regulation of cell cycle"/>
    <property type="evidence" value="ECO:0000266"/>
    <property type="project" value="RGD"/>
</dbReference>
<dbReference type="GO" id="GO:0042127">
    <property type="term" value="P:regulation of cell population proliferation"/>
    <property type="evidence" value="ECO:0000266"/>
    <property type="project" value="RGD"/>
</dbReference>
<dbReference type="GO" id="GO:0010569">
    <property type="term" value="P:regulation of double-strand break repair via homologous recombination"/>
    <property type="evidence" value="ECO:0000250"/>
    <property type="project" value="UniProtKB"/>
</dbReference>
<dbReference type="GO" id="GO:0010468">
    <property type="term" value="P:regulation of gene expression"/>
    <property type="evidence" value="ECO:0000266"/>
    <property type="project" value="RGD"/>
</dbReference>
<dbReference type="GO" id="GO:0046602">
    <property type="term" value="P:regulation of mitotic centrosome separation"/>
    <property type="evidence" value="ECO:0000250"/>
    <property type="project" value="UniProtKB"/>
</dbReference>
<dbReference type="GO" id="GO:0042770">
    <property type="term" value="P:signal transduction in response to DNA damage"/>
    <property type="evidence" value="ECO:0000315"/>
    <property type="project" value="RGD"/>
</dbReference>
<dbReference type="CDD" id="cd14069">
    <property type="entry name" value="STKc_Chk1"/>
    <property type="match status" value="1"/>
</dbReference>
<dbReference type="FunFam" id="1.10.510.10:FF:000301">
    <property type="entry name" value="Serine/threonine-protein kinase Chk1"/>
    <property type="match status" value="1"/>
</dbReference>
<dbReference type="FunFam" id="3.30.200.20:FF:000229">
    <property type="entry name" value="Serine/threonine-protein kinase Chk1"/>
    <property type="match status" value="1"/>
</dbReference>
<dbReference type="FunFam" id="3.30.310.80:FF:000007">
    <property type="entry name" value="Serine/threonine-protein kinase Chk1 isoform 1"/>
    <property type="match status" value="1"/>
</dbReference>
<dbReference type="Gene3D" id="3.30.310.80">
    <property type="entry name" value="Kinase associated domain 1, KA1"/>
    <property type="match status" value="1"/>
</dbReference>
<dbReference type="Gene3D" id="3.30.200.20">
    <property type="entry name" value="Phosphorylase Kinase, domain 1"/>
    <property type="match status" value="1"/>
</dbReference>
<dbReference type="Gene3D" id="1.10.510.10">
    <property type="entry name" value="Transferase(Phosphotransferase) domain 1"/>
    <property type="match status" value="1"/>
</dbReference>
<dbReference type="InterPro" id="IPR034670">
    <property type="entry name" value="Chk1_catalytic_dom"/>
</dbReference>
<dbReference type="InterPro" id="IPR011009">
    <property type="entry name" value="Kinase-like_dom_sf"/>
</dbReference>
<dbReference type="InterPro" id="IPR000719">
    <property type="entry name" value="Prot_kinase_dom"/>
</dbReference>
<dbReference type="InterPro" id="IPR017441">
    <property type="entry name" value="Protein_kinase_ATP_BS"/>
</dbReference>
<dbReference type="InterPro" id="IPR008271">
    <property type="entry name" value="Ser/Thr_kinase_AS"/>
</dbReference>
<dbReference type="PANTHER" id="PTHR24346">
    <property type="entry name" value="MAP/MICROTUBULE AFFINITY-REGULATING KINASE"/>
    <property type="match status" value="1"/>
</dbReference>
<dbReference type="PANTHER" id="PTHR24346:SF107">
    <property type="entry name" value="SERINE_THREONINE-PROTEIN KINASE CHK1"/>
    <property type="match status" value="1"/>
</dbReference>
<dbReference type="Pfam" id="PF00069">
    <property type="entry name" value="Pkinase"/>
    <property type="match status" value="1"/>
</dbReference>
<dbReference type="SMART" id="SM00220">
    <property type="entry name" value="S_TKc"/>
    <property type="match status" value="1"/>
</dbReference>
<dbReference type="SUPFAM" id="SSF56112">
    <property type="entry name" value="Protein kinase-like (PK-like)"/>
    <property type="match status" value="1"/>
</dbReference>
<dbReference type="PROSITE" id="PS00107">
    <property type="entry name" value="PROTEIN_KINASE_ATP"/>
    <property type="match status" value="1"/>
</dbReference>
<dbReference type="PROSITE" id="PS50011">
    <property type="entry name" value="PROTEIN_KINASE_DOM"/>
    <property type="match status" value="1"/>
</dbReference>
<dbReference type="PROSITE" id="PS00108">
    <property type="entry name" value="PROTEIN_KINASE_ST"/>
    <property type="match status" value="1"/>
</dbReference>
<evidence type="ECO:0000250" key="1"/>
<evidence type="ECO:0000250" key="2">
    <source>
        <dbReference type="UniProtKB" id="O14757"/>
    </source>
</evidence>
<evidence type="ECO:0000250" key="3">
    <source>
        <dbReference type="UniProtKB" id="O35280"/>
    </source>
</evidence>
<evidence type="ECO:0000255" key="4">
    <source>
        <dbReference type="PROSITE-ProRule" id="PRU00159"/>
    </source>
</evidence>
<evidence type="ECO:0000255" key="5">
    <source>
        <dbReference type="PROSITE-ProRule" id="PRU10027"/>
    </source>
</evidence>
<evidence type="ECO:0000256" key="6">
    <source>
        <dbReference type="SAM" id="MobiDB-lite"/>
    </source>
</evidence>
<evidence type="ECO:0000269" key="7">
    <source>
    </source>
</evidence>
<evidence type="ECO:0000303" key="8">
    <source>
    </source>
</evidence>
<evidence type="ECO:0000305" key="9"/>
<reference key="1">
    <citation type="journal article" date="2001" name="J. Biol. Chem.">
        <title>Cloning and characterization of liver-specific isoform of Chk1 gene from rat.</title>
        <authorList>
            <person name="Shann Y.-J."/>
            <person name="Hsu M.-T."/>
        </authorList>
    </citation>
    <scope>NUCLEOTIDE SEQUENCE [MRNA] (ISOFORMS 1 AND 2)</scope>
    <scope>ALTERNATIVE PROMOTER USAGE</scope>
    <scope>TISSUE SPECIFICITY</scope>
    <source>
        <tissue>Liver</tissue>
    </source>
</reference>
<reference key="2">
    <citation type="submission" date="2001-11" db="EMBL/GenBank/DDBJ databases">
        <title>The rat homolog of checkpoint kinase chk1.</title>
        <authorList>
            <person name="Wang X."/>
            <person name="Wang Y."/>
        </authorList>
    </citation>
    <scope>NUCLEOTIDE SEQUENCE [MRNA] (ISOFORM 1)</scope>
    <source>
        <strain>Fischer 344</strain>
    </source>
</reference>